<dbReference type="EMBL" id="CP000034">
    <property type="protein sequence ID" value="ABB63377.1"/>
    <property type="molecule type" value="Genomic_DNA"/>
</dbReference>
<dbReference type="RefSeq" id="WP_000243739.1">
    <property type="nucleotide sequence ID" value="NC_007606.1"/>
</dbReference>
<dbReference type="RefSeq" id="YP_404868.1">
    <property type="nucleotide sequence ID" value="NC_007606.1"/>
</dbReference>
<dbReference type="SMR" id="Q32BC8"/>
<dbReference type="STRING" id="300267.SDY_3386"/>
<dbReference type="EnsemblBacteria" id="ABB63377">
    <property type="protein sequence ID" value="ABB63377"/>
    <property type="gene ID" value="SDY_3386"/>
</dbReference>
<dbReference type="KEGG" id="sdy:SDY_3386"/>
<dbReference type="PATRIC" id="fig|300267.13.peg.4040"/>
<dbReference type="HOGENOM" id="CLU_059558_1_1_6"/>
<dbReference type="Proteomes" id="UP000002716">
    <property type="component" value="Chromosome"/>
</dbReference>
<dbReference type="GO" id="GO:0005524">
    <property type="term" value="F:ATP binding"/>
    <property type="evidence" value="ECO:0007669"/>
    <property type="project" value="UniProtKB-UniRule"/>
</dbReference>
<dbReference type="GO" id="GO:0005525">
    <property type="term" value="F:GTP binding"/>
    <property type="evidence" value="ECO:0007669"/>
    <property type="project" value="UniProtKB-UniRule"/>
</dbReference>
<dbReference type="GO" id="GO:0003723">
    <property type="term" value="F:RNA binding"/>
    <property type="evidence" value="ECO:0007669"/>
    <property type="project" value="UniProtKB-KW"/>
</dbReference>
<dbReference type="Gene3D" id="3.40.50.300">
    <property type="entry name" value="P-loop containing nucleotide triphosphate hydrolases"/>
    <property type="match status" value="1"/>
</dbReference>
<dbReference type="HAMAP" id="MF_00636">
    <property type="entry name" value="RapZ_like"/>
    <property type="match status" value="1"/>
</dbReference>
<dbReference type="InterPro" id="IPR027417">
    <property type="entry name" value="P-loop_NTPase"/>
</dbReference>
<dbReference type="InterPro" id="IPR005337">
    <property type="entry name" value="RapZ-like"/>
</dbReference>
<dbReference type="InterPro" id="IPR053930">
    <property type="entry name" value="RapZ-like_N"/>
</dbReference>
<dbReference type="InterPro" id="IPR053931">
    <property type="entry name" value="RapZ_C"/>
</dbReference>
<dbReference type="NCBIfam" id="NF003828">
    <property type="entry name" value="PRK05416.1"/>
    <property type="match status" value="1"/>
</dbReference>
<dbReference type="PANTHER" id="PTHR30448">
    <property type="entry name" value="RNASE ADAPTER PROTEIN RAPZ"/>
    <property type="match status" value="1"/>
</dbReference>
<dbReference type="PANTHER" id="PTHR30448:SF0">
    <property type="entry name" value="RNASE ADAPTER PROTEIN RAPZ"/>
    <property type="match status" value="1"/>
</dbReference>
<dbReference type="Pfam" id="PF22740">
    <property type="entry name" value="PapZ_C"/>
    <property type="match status" value="1"/>
</dbReference>
<dbReference type="Pfam" id="PF03668">
    <property type="entry name" value="RapZ-like_N"/>
    <property type="match status" value="1"/>
</dbReference>
<dbReference type="PIRSF" id="PIRSF005052">
    <property type="entry name" value="P-loopkin"/>
    <property type="match status" value="1"/>
</dbReference>
<dbReference type="SUPFAM" id="SSF52540">
    <property type="entry name" value="P-loop containing nucleoside triphosphate hydrolases"/>
    <property type="match status" value="1"/>
</dbReference>
<feature type="chain" id="PRO_0000258998" description="RNase adapter protein RapZ">
    <location>
        <begin position="1"/>
        <end position="284"/>
    </location>
</feature>
<feature type="region of interest" description="RNA-binding" evidence="1">
    <location>
        <begin position="266"/>
        <end position="284"/>
    </location>
</feature>
<feature type="binding site" evidence="1">
    <location>
        <begin position="8"/>
        <end position="15"/>
    </location>
    <ligand>
        <name>ATP</name>
        <dbReference type="ChEBI" id="CHEBI:30616"/>
    </ligand>
</feature>
<feature type="binding site" evidence="1">
    <location>
        <begin position="56"/>
        <end position="59"/>
    </location>
    <ligand>
        <name>GTP</name>
        <dbReference type="ChEBI" id="CHEBI:37565"/>
    </ligand>
</feature>
<comment type="function">
    <text evidence="1">Modulates the synthesis of GlmS, by affecting the processing and stability of the regulatory small RNA GlmZ. When glucosamine-6-phosphate (GlcN6P) concentrations are high in the cell, RapZ binds GlmZ and targets it to cleavage by RNase E. Consequently, GlmZ is inactivated and unable to activate GlmS synthesis. Under low GlcN6P concentrations, RapZ is sequestered and inactivated by an other regulatory small RNA, GlmY, preventing GlmZ degradation and leading to synthesis of GlmS.</text>
</comment>
<comment type="subunit">
    <text evidence="1">Homotrimer.</text>
</comment>
<comment type="similarity">
    <text evidence="1">Belongs to the RapZ-like family. RapZ subfamily.</text>
</comment>
<protein>
    <recommendedName>
        <fullName evidence="1">RNase adapter protein RapZ</fullName>
    </recommendedName>
</protein>
<name>RAPZ_SHIDS</name>
<gene>
    <name evidence="1" type="primary">rapZ</name>
    <name type="ordered locus">SDY_3386</name>
</gene>
<keyword id="KW-0067">ATP-binding</keyword>
<keyword id="KW-0342">GTP-binding</keyword>
<keyword id="KW-0547">Nucleotide-binding</keyword>
<keyword id="KW-1185">Reference proteome</keyword>
<keyword id="KW-0694">RNA-binding</keyword>
<accession>Q32BC8</accession>
<organism>
    <name type="scientific">Shigella dysenteriae serotype 1 (strain Sd197)</name>
    <dbReference type="NCBI Taxonomy" id="300267"/>
    <lineage>
        <taxon>Bacteria</taxon>
        <taxon>Pseudomonadati</taxon>
        <taxon>Pseudomonadota</taxon>
        <taxon>Gammaproteobacteria</taxon>
        <taxon>Enterobacterales</taxon>
        <taxon>Enterobacteriaceae</taxon>
        <taxon>Shigella</taxon>
    </lineage>
</organism>
<sequence length="284" mass="32519">MVLMIVSGRSGSGKSVALRALEDMGFYCVDNLPVVLLPDLARTLADREISAAVSIDVRNMPESPEIFEQAMSNLPDAFSPQLLFLDADRNTLIRRYSDTRRLHPLSNKNLSLESAIDKESDLLEPLRSRADLIVDTSEMSVHELAEMLRTRLLGKRERELTMVFESFGFKHGIPIDADYVFDVRFLPNPHWDPKLRPMTGLDKPVAAFLDRHTEVHNFIYQTRSYLELWLPMLETNNRSYLTVAIGCTGGKHRSVYIAEQLADYFRSRGKNVQSRHRTLEKRKP</sequence>
<evidence type="ECO:0000255" key="1">
    <source>
        <dbReference type="HAMAP-Rule" id="MF_00636"/>
    </source>
</evidence>
<proteinExistence type="inferred from homology"/>
<reference key="1">
    <citation type="journal article" date="2005" name="Nucleic Acids Res.">
        <title>Genome dynamics and diversity of Shigella species, the etiologic agents of bacillary dysentery.</title>
        <authorList>
            <person name="Yang F."/>
            <person name="Yang J."/>
            <person name="Zhang X."/>
            <person name="Chen L."/>
            <person name="Jiang Y."/>
            <person name="Yan Y."/>
            <person name="Tang X."/>
            <person name="Wang J."/>
            <person name="Xiong Z."/>
            <person name="Dong J."/>
            <person name="Xue Y."/>
            <person name="Zhu Y."/>
            <person name="Xu X."/>
            <person name="Sun L."/>
            <person name="Chen S."/>
            <person name="Nie H."/>
            <person name="Peng J."/>
            <person name="Xu J."/>
            <person name="Wang Y."/>
            <person name="Yuan Z."/>
            <person name="Wen Y."/>
            <person name="Yao Z."/>
            <person name="Shen Y."/>
            <person name="Qiang B."/>
            <person name="Hou Y."/>
            <person name="Yu J."/>
            <person name="Jin Q."/>
        </authorList>
    </citation>
    <scope>NUCLEOTIDE SEQUENCE [LARGE SCALE GENOMIC DNA]</scope>
    <source>
        <strain>Sd197</strain>
    </source>
</reference>